<organism>
    <name type="scientific">Shewanella piezotolerans (strain WP3 / JCM 13877)</name>
    <dbReference type="NCBI Taxonomy" id="225849"/>
    <lineage>
        <taxon>Bacteria</taxon>
        <taxon>Pseudomonadati</taxon>
        <taxon>Pseudomonadota</taxon>
        <taxon>Gammaproteobacteria</taxon>
        <taxon>Alteromonadales</taxon>
        <taxon>Shewanellaceae</taxon>
        <taxon>Shewanella</taxon>
    </lineage>
</organism>
<evidence type="ECO:0000255" key="1">
    <source>
        <dbReference type="HAMAP-Rule" id="MF_00188"/>
    </source>
</evidence>
<name>HTPX_SHEPW</name>
<accession>B8CQX8</accession>
<comment type="cofactor">
    <cofactor evidence="1">
        <name>Zn(2+)</name>
        <dbReference type="ChEBI" id="CHEBI:29105"/>
    </cofactor>
    <text evidence="1">Binds 1 zinc ion per subunit.</text>
</comment>
<comment type="subcellular location">
    <subcellularLocation>
        <location evidence="1">Cell inner membrane</location>
        <topology evidence="1">Multi-pass membrane protein</topology>
    </subcellularLocation>
</comment>
<comment type="similarity">
    <text evidence="1">Belongs to the peptidase M48B family.</text>
</comment>
<gene>
    <name evidence="1" type="primary">htpX</name>
    <name type="ordered locus">swp_2924</name>
</gene>
<sequence length="287" mass="30759">MKRIFLLIATNMAILLVASIVMSILGVNTSTMSGLLVFAAIFGFGGAFISLAISKWMAKKTMGCEVITNPRDNTERWLVETVARQAEQAGIKMPEVAIYQSQEFNAFATGPSKNNSLVAVSSGLLYGMNHDEIEAVLAHEVSHVANGDMVTLTLIQGVVNTFVIFAARVVAGIINNFVASNDEEGEGLGMFAYMAVVFVLDMLFGILASIIVAYFSRIREFKADEGGARLAGKEKMIAALDRLKQGPETGAMPASMSALGINGKKSMAELMMSHPPLDKRIAALRAS</sequence>
<protein>
    <recommendedName>
        <fullName evidence="1">Protease HtpX</fullName>
        <ecNumber evidence="1">3.4.24.-</ecNumber>
    </recommendedName>
    <alternativeName>
        <fullName evidence="1">Heat shock protein HtpX</fullName>
    </alternativeName>
</protein>
<dbReference type="EC" id="3.4.24.-" evidence="1"/>
<dbReference type="EMBL" id="CP000472">
    <property type="protein sequence ID" value="ACJ29650.1"/>
    <property type="molecule type" value="Genomic_DNA"/>
</dbReference>
<dbReference type="RefSeq" id="WP_020913004.1">
    <property type="nucleotide sequence ID" value="NC_011566.1"/>
</dbReference>
<dbReference type="SMR" id="B8CQX8"/>
<dbReference type="STRING" id="225849.swp_2924"/>
<dbReference type="MEROPS" id="M48.002"/>
<dbReference type="KEGG" id="swp:swp_2924"/>
<dbReference type="eggNOG" id="COG0501">
    <property type="taxonomic scope" value="Bacteria"/>
</dbReference>
<dbReference type="HOGENOM" id="CLU_042266_1_0_6"/>
<dbReference type="OrthoDB" id="15218at2"/>
<dbReference type="Proteomes" id="UP000000753">
    <property type="component" value="Chromosome"/>
</dbReference>
<dbReference type="GO" id="GO:0005886">
    <property type="term" value="C:plasma membrane"/>
    <property type="evidence" value="ECO:0007669"/>
    <property type="project" value="UniProtKB-SubCell"/>
</dbReference>
<dbReference type="GO" id="GO:0004222">
    <property type="term" value="F:metalloendopeptidase activity"/>
    <property type="evidence" value="ECO:0007669"/>
    <property type="project" value="UniProtKB-UniRule"/>
</dbReference>
<dbReference type="GO" id="GO:0008270">
    <property type="term" value="F:zinc ion binding"/>
    <property type="evidence" value="ECO:0007669"/>
    <property type="project" value="UniProtKB-UniRule"/>
</dbReference>
<dbReference type="GO" id="GO:0006508">
    <property type="term" value="P:proteolysis"/>
    <property type="evidence" value="ECO:0007669"/>
    <property type="project" value="UniProtKB-KW"/>
</dbReference>
<dbReference type="CDD" id="cd07335">
    <property type="entry name" value="M48B_HtpX_like"/>
    <property type="match status" value="1"/>
</dbReference>
<dbReference type="FunFam" id="3.30.2010.10:FF:000001">
    <property type="entry name" value="Protease HtpX"/>
    <property type="match status" value="1"/>
</dbReference>
<dbReference type="Gene3D" id="3.30.2010.10">
    <property type="entry name" value="Metalloproteases ('zincins'), catalytic domain"/>
    <property type="match status" value="1"/>
</dbReference>
<dbReference type="HAMAP" id="MF_00188">
    <property type="entry name" value="Pept_M48_protease_HtpX"/>
    <property type="match status" value="1"/>
</dbReference>
<dbReference type="InterPro" id="IPR050083">
    <property type="entry name" value="HtpX_protease"/>
</dbReference>
<dbReference type="InterPro" id="IPR022919">
    <property type="entry name" value="Pept_M48_protease_HtpX"/>
</dbReference>
<dbReference type="InterPro" id="IPR001915">
    <property type="entry name" value="Peptidase_M48"/>
</dbReference>
<dbReference type="NCBIfam" id="NF003965">
    <property type="entry name" value="PRK05457.1"/>
    <property type="match status" value="1"/>
</dbReference>
<dbReference type="PANTHER" id="PTHR43221">
    <property type="entry name" value="PROTEASE HTPX"/>
    <property type="match status" value="1"/>
</dbReference>
<dbReference type="PANTHER" id="PTHR43221:SF1">
    <property type="entry name" value="PROTEASE HTPX"/>
    <property type="match status" value="1"/>
</dbReference>
<dbReference type="Pfam" id="PF01435">
    <property type="entry name" value="Peptidase_M48"/>
    <property type="match status" value="1"/>
</dbReference>
<proteinExistence type="inferred from homology"/>
<reference key="1">
    <citation type="journal article" date="2008" name="PLoS ONE">
        <title>Environmental adaptation: genomic analysis of the piezotolerant and psychrotolerant deep-sea iron reducing bacterium Shewanella piezotolerans WP3.</title>
        <authorList>
            <person name="Wang F."/>
            <person name="Wang J."/>
            <person name="Jian H."/>
            <person name="Zhang B."/>
            <person name="Li S."/>
            <person name="Wang F."/>
            <person name="Zeng X."/>
            <person name="Gao L."/>
            <person name="Bartlett D.H."/>
            <person name="Yu J."/>
            <person name="Hu S."/>
            <person name="Xiao X."/>
        </authorList>
    </citation>
    <scope>NUCLEOTIDE SEQUENCE [LARGE SCALE GENOMIC DNA]</scope>
    <source>
        <strain>WP3 / JCM 13877</strain>
    </source>
</reference>
<feature type="chain" id="PRO_1000118575" description="Protease HtpX">
    <location>
        <begin position="1"/>
        <end position="287"/>
    </location>
</feature>
<feature type="transmembrane region" description="Helical" evidence="1">
    <location>
        <begin position="4"/>
        <end position="24"/>
    </location>
</feature>
<feature type="transmembrane region" description="Helical" evidence="1">
    <location>
        <begin position="33"/>
        <end position="53"/>
    </location>
</feature>
<feature type="transmembrane region" description="Helical" evidence="1">
    <location>
        <begin position="154"/>
        <end position="174"/>
    </location>
</feature>
<feature type="transmembrane region" description="Helical" evidence="1">
    <location>
        <begin position="195"/>
        <end position="215"/>
    </location>
</feature>
<feature type="active site" evidence="1">
    <location>
        <position position="140"/>
    </location>
</feature>
<feature type="binding site" evidence="1">
    <location>
        <position position="139"/>
    </location>
    <ligand>
        <name>Zn(2+)</name>
        <dbReference type="ChEBI" id="CHEBI:29105"/>
        <note>catalytic</note>
    </ligand>
</feature>
<feature type="binding site" evidence="1">
    <location>
        <position position="143"/>
    </location>
    <ligand>
        <name>Zn(2+)</name>
        <dbReference type="ChEBI" id="CHEBI:29105"/>
        <note>catalytic</note>
    </ligand>
</feature>
<feature type="binding site" evidence="1">
    <location>
        <position position="220"/>
    </location>
    <ligand>
        <name>Zn(2+)</name>
        <dbReference type="ChEBI" id="CHEBI:29105"/>
        <note>catalytic</note>
    </ligand>
</feature>
<keyword id="KW-0997">Cell inner membrane</keyword>
<keyword id="KW-1003">Cell membrane</keyword>
<keyword id="KW-0378">Hydrolase</keyword>
<keyword id="KW-0472">Membrane</keyword>
<keyword id="KW-0479">Metal-binding</keyword>
<keyword id="KW-0482">Metalloprotease</keyword>
<keyword id="KW-0645">Protease</keyword>
<keyword id="KW-0812">Transmembrane</keyword>
<keyword id="KW-1133">Transmembrane helix</keyword>
<keyword id="KW-0862">Zinc</keyword>